<sequence length="495" mass="56223">MDSLAESRWPPGLAVMKTIDDLLRCGICFEYFNIAMIIPQCSHNYCSLCIRKFLSYKTQCPTCCVTVTEPDLKNNRILDELVKSLNFARNHLLQFALESPAKSPASSSSKNLAVKVYTPVASRQSLKQGSRLMDNFLIREMSGSTSELLIKENKSKFSPQKEASPAAKTKETRSVEEIAPDPSEAKRPEPPSTSTLKQVTKVDCPVCGVNIPESHINKHLDSCLSREEKKESLRSSVHKRKPLPKTVYNLLSDRDLKKKLKEHGLSIQGNKQQLIKRHQEFVHMYNAQCDALHPKSAAEIVREIENIEKTRMRLEASKLNESVMVFTKDQTEKEIDEIHSKYRKKHKSEFQLLVDQARKGYKKIAGMSQKTVTITKEDESTEKLSSVCMGQEDNMTSVTNHFSQSKLDSPEELEPDREEDSSSCIDIQEVLSSSESDSCNSSSSDIIRDLLEEEEAWEASHKNDLQDTEISPRQNRRTRAAESAEIEPRNKRNRN</sequence>
<feature type="chain" id="PRO_0000056149" description="E3 ubiquitin-protein ligase RAD18">
    <location>
        <begin position="1"/>
        <end position="495"/>
    </location>
</feature>
<feature type="domain" description="SAP" evidence="2">
    <location>
        <begin position="248"/>
        <end position="282"/>
    </location>
</feature>
<feature type="zinc finger region" description="RING-type" evidence="1">
    <location>
        <begin position="25"/>
        <end position="64"/>
    </location>
</feature>
<feature type="zinc finger region" description="UBZ4-type" evidence="3">
    <location>
        <begin position="201"/>
        <end position="228"/>
    </location>
</feature>
<feature type="region of interest" description="Disordered" evidence="4">
    <location>
        <begin position="152"/>
        <end position="197"/>
    </location>
</feature>
<feature type="region of interest" description="Disordered" evidence="4">
    <location>
        <begin position="400"/>
        <end position="423"/>
    </location>
</feature>
<feature type="region of interest" description="Disordered" evidence="4">
    <location>
        <begin position="456"/>
        <end position="495"/>
    </location>
</feature>
<feature type="short sequence motif" description="LR motif">
    <location>
        <begin position="232"/>
        <end position="240"/>
    </location>
</feature>
<feature type="compositionally biased region" description="Acidic residues" evidence="4">
    <location>
        <begin position="410"/>
        <end position="421"/>
    </location>
</feature>
<feature type="compositionally biased region" description="Basic and acidic residues" evidence="4">
    <location>
        <begin position="479"/>
        <end position="495"/>
    </location>
</feature>
<feature type="binding site" evidence="3">
    <location>
        <position position="204"/>
    </location>
    <ligand>
        <name>Zn(2+)</name>
        <dbReference type="ChEBI" id="CHEBI:29105"/>
    </ligand>
</feature>
<feature type="binding site" evidence="3">
    <location>
        <position position="207"/>
    </location>
    <ligand>
        <name>Zn(2+)</name>
        <dbReference type="ChEBI" id="CHEBI:29105"/>
    </ligand>
</feature>
<feature type="binding site" evidence="3">
    <location>
        <position position="219"/>
    </location>
    <ligand>
        <name>Zn(2+)</name>
        <dbReference type="ChEBI" id="CHEBI:29105"/>
    </ligand>
</feature>
<feature type="binding site" evidence="3">
    <location>
        <position position="223"/>
    </location>
    <ligand>
        <name>Zn(2+)</name>
        <dbReference type="ChEBI" id="CHEBI:29105"/>
    </ligand>
</feature>
<feature type="modified residue" description="N-acetylmethionine" evidence="30">
    <location>
        <position position="1"/>
    </location>
</feature>
<feature type="modified residue" description="Phosphoserine" evidence="24 25 26 27 28 29 31">
    <location>
        <position position="99"/>
    </location>
</feature>
<feature type="modified residue" description="Phosphoserine" evidence="26 27 31">
    <location>
        <position position="103"/>
    </location>
</feature>
<feature type="modified residue" description="Phosphothreonine" evidence="26 31">
    <location>
        <position position="118"/>
    </location>
</feature>
<feature type="modified residue" description="Phosphoserine" evidence="31">
    <location>
        <position position="122"/>
    </location>
</feature>
<feature type="modified residue" description="Phosphoserine" evidence="31">
    <location>
        <position position="125"/>
    </location>
</feature>
<feature type="modified residue" description="Phosphoserine" evidence="31">
    <location>
        <position position="142"/>
    </location>
</feature>
<feature type="modified residue" description="Phosphoserine" evidence="31">
    <location>
        <position position="158"/>
    </location>
</feature>
<feature type="modified residue" description="Phosphoserine" evidence="26 31">
    <location>
        <position position="164"/>
    </location>
</feature>
<feature type="modified residue" description="Phosphoserine" evidence="31">
    <location>
        <position position="322"/>
    </location>
</feature>
<feature type="modified residue" description="Phosphoserine" evidence="23 28 29 31">
    <location>
        <position position="471"/>
    </location>
</feature>
<feature type="modified residue" description="Phosphoserine" evidence="31">
    <location>
        <position position="483"/>
    </location>
</feature>
<feature type="cross-link" description="Glycyl lysine isopeptide (Lys-Gly) (interchain with G-Cter in SUMO2)" evidence="32 33">
    <location>
        <position position="376"/>
    </location>
</feature>
<feature type="sequence variant" id="VAR_023423" description="In dbSNP:rs45520133." evidence="21">
    <original>E</original>
    <variation>A</variation>
    <location>
        <position position="6"/>
    </location>
</feature>
<feature type="sequence variant" id="VAR_023424" description="In dbSNP:rs373572." evidence="5 6 7 8 20 21">
    <original>R</original>
    <variation>Q</variation>
    <location>
        <position position="302"/>
    </location>
</feature>
<feature type="sequence variant" id="VAR_023425" description="In dbSNP:rs45569933." evidence="21">
    <original>I</original>
    <variation>V</variation>
    <location>
        <position position="307"/>
    </location>
</feature>
<feature type="mutagenesis site" description="Lower activity toward PCNA monoubiquitination." evidence="14">
    <original>I</original>
    <variation>A</variation>
    <location>
        <position position="27"/>
    </location>
</feature>
<feature type="mutagenesis site" description="Does not interact with SLF1 and is defective in restoring cell survival after DNA damage; when associated with A-444." evidence="16 18">
    <original>S</original>
    <variation>A</variation>
    <location>
        <position position="442"/>
    </location>
</feature>
<feature type="mutagenesis site" description="Does not interact with SLF1 and is defective in restoring cell survival after DNA damage; when associated with A-442." evidence="16 18">
    <original>S</original>
    <variation>A</variation>
    <location>
        <position position="444"/>
    </location>
</feature>
<feature type="sequence conflict" description="In Ref. 2; AAF80856." evidence="22" ref="2">
    <original>P</original>
    <variation>L</variation>
    <location>
        <position position="191"/>
    </location>
</feature>
<feature type="sequence conflict" description="In Ref. 2; AAF80856." evidence="22" ref="2">
    <original>ESA</original>
    <variation>GKC</variation>
    <location>
        <begin position="482"/>
        <end position="484"/>
    </location>
</feature>
<feature type="helix" evidence="35">
    <location>
        <begin position="11"/>
        <end position="16"/>
    </location>
</feature>
<feature type="helix" evidence="35">
    <location>
        <begin position="17"/>
        <end position="22"/>
    </location>
</feature>
<feature type="turn" evidence="35">
    <location>
        <begin position="26"/>
        <end position="28"/>
    </location>
</feature>
<feature type="strand" evidence="35">
    <location>
        <begin position="33"/>
        <end position="37"/>
    </location>
</feature>
<feature type="turn" evidence="35">
    <location>
        <begin position="39"/>
        <end position="41"/>
    </location>
</feature>
<feature type="strand" evidence="35">
    <location>
        <begin position="44"/>
        <end position="46"/>
    </location>
</feature>
<feature type="helix" evidence="35">
    <location>
        <begin position="47"/>
        <end position="54"/>
    </location>
</feature>
<feature type="turn" evidence="35">
    <location>
        <begin position="61"/>
        <end position="63"/>
    </location>
</feature>
<feature type="helix" evidence="35">
    <location>
        <begin position="69"/>
        <end position="71"/>
    </location>
</feature>
<feature type="helix" evidence="35">
    <location>
        <begin position="76"/>
        <end position="90"/>
    </location>
</feature>
<feature type="strand" evidence="34">
    <location>
        <begin position="201"/>
        <end position="204"/>
    </location>
</feature>
<feature type="turn" evidence="34">
    <location>
        <begin position="205"/>
        <end position="208"/>
    </location>
</feature>
<feature type="strand" evidence="34">
    <location>
        <begin position="209"/>
        <end position="212"/>
    </location>
</feature>
<feature type="helix" evidence="34">
    <location>
        <begin position="213"/>
        <end position="223"/>
    </location>
</feature>
<feature type="strand" evidence="37">
    <location>
        <begin position="236"/>
        <end position="238"/>
    </location>
</feature>
<feature type="helix" evidence="36">
    <location>
        <begin position="342"/>
        <end position="345"/>
    </location>
</feature>
<feature type="helix" evidence="36">
    <location>
        <begin position="347"/>
        <end position="358"/>
    </location>
</feature>
<feature type="helix" evidence="38">
    <location>
        <begin position="438"/>
        <end position="440"/>
    </location>
</feature>
<feature type="helix" evidence="38">
    <location>
        <begin position="446"/>
        <end position="451"/>
    </location>
</feature>
<proteinExistence type="evidence at protein level"/>
<protein>
    <recommendedName>
        <fullName>E3 ubiquitin-protein ligase RAD18</fullName>
        <ecNumber>2.3.2.27</ecNumber>
    </recommendedName>
    <alternativeName>
        <fullName>Postreplication repair protein RAD18</fullName>
        <shortName>hHR18</shortName>
        <shortName>hRAD18</shortName>
    </alternativeName>
    <alternativeName>
        <fullName>RING finger protein 73</fullName>
    </alternativeName>
    <alternativeName>
        <fullName evidence="22">RING-type E3 ubiquitin transferase RAD18</fullName>
    </alternativeName>
</protein>
<accession>Q9NS91</accession>
<accession>Q58F55</accession>
<accession>Q9NRT6</accession>
<dbReference type="EC" id="2.3.2.27"/>
<dbReference type="EMBL" id="AB035274">
    <property type="protein sequence ID" value="BAA99284.1"/>
    <property type="molecule type" value="mRNA"/>
</dbReference>
<dbReference type="EMBL" id="AF169796">
    <property type="protein sequence ID" value="AAF80856.1"/>
    <property type="molecule type" value="mRNA"/>
</dbReference>
<dbReference type="EMBL" id="AY004333">
    <property type="protein sequence ID" value="AAF86618.1"/>
    <property type="molecule type" value="mRNA"/>
</dbReference>
<dbReference type="EMBL" id="AK023075">
    <property type="protein sequence ID" value="BAB14392.1"/>
    <property type="molecule type" value="mRNA"/>
</dbReference>
<dbReference type="EMBL" id="AY961989">
    <property type="protein sequence ID" value="AAX44049.1"/>
    <property type="molecule type" value="Genomic_DNA"/>
</dbReference>
<dbReference type="EMBL" id="AC008151">
    <property type="status" value="NOT_ANNOTATED_CDS"/>
    <property type="molecule type" value="Genomic_DNA"/>
</dbReference>
<dbReference type="EMBL" id="AC034186">
    <property type="status" value="NOT_ANNOTATED_CDS"/>
    <property type="molecule type" value="Genomic_DNA"/>
</dbReference>
<dbReference type="EMBL" id="BC001302">
    <property type="protein sequence ID" value="AAH01302.1"/>
    <property type="molecule type" value="mRNA"/>
</dbReference>
<dbReference type="CCDS" id="CCDS2571.1"/>
<dbReference type="RefSeq" id="NP_064550.3">
    <property type="nucleotide sequence ID" value="NM_020165.3"/>
</dbReference>
<dbReference type="PDB" id="2MRE">
    <property type="method" value="NMR"/>
    <property type="chains" value="B=198-227"/>
</dbReference>
<dbReference type="PDB" id="2MRF">
    <property type="method" value="NMR"/>
    <property type="chains" value="A=198-227"/>
</dbReference>
<dbReference type="PDB" id="2Y43">
    <property type="method" value="X-ray"/>
    <property type="resolution" value="1.80 A"/>
    <property type="chains" value="A/B=1-99"/>
</dbReference>
<dbReference type="PDB" id="2YBF">
    <property type="method" value="X-ray"/>
    <property type="resolution" value="2.00 A"/>
    <property type="chains" value="B=340-366"/>
</dbReference>
<dbReference type="PDB" id="5VF0">
    <property type="method" value="NMR"/>
    <property type="chains" value="B=198-240"/>
</dbReference>
<dbReference type="PDB" id="8IR2">
    <property type="method" value="X-ray"/>
    <property type="resolution" value="1.75 A"/>
    <property type="chains" value="C/D=436-452"/>
</dbReference>
<dbReference type="PDB" id="8IR4">
    <property type="method" value="X-ray"/>
    <property type="resolution" value="1.62 A"/>
    <property type="chains" value="C/D=436-452"/>
</dbReference>
<dbReference type="PDB" id="9BD3">
    <property type="method" value="X-ray"/>
    <property type="resolution" value="2.58 A"/>
    <property type="chains" value="B/D=339-366"/>
</dbReference>
<dbReference type="PDBsum" id="2MRE"/>
<dbReference type="PDBsum" id="2MRF"/>
<dbReference type="PDBsum" id="2Y43"/>
<dbReference type="PDBsum" id="2YBF"/>
<dbReference type="PDBsum" id="5VF0"/>
<dbReference type="PDBsum" id="8IR2"/>
<dbReference type="PDBsum" id="8IR4"/>
<dbReference type="PDBsum" id="9BD3"/>
<dbReference type="SMR" id="Q9NS91"/>
<dbReference type="BioGRID" id="121212">
    <property type="interactions" value="468"/>
</dbReference>
<dbReference type="CORUM" id="Q9NS91"/>
<dbReference type="DIP" id="DIP-29831N"/>
<dbReference type="FunCoup" id="Q9NS91">
    <property type="interactions" value="1816"/>
</dbReference>
<dbReference type="IntAct" id="Q9NS91">
    <property type="interactions" value="88"/>
</dbReference>
<dbReference type="MINT" id="Q9NS91"/>
<dbReference type="STRING" id="9606.ENSP00000264926"/>
<dbReference type="GlyGen" id="Q9NS91">
    <property type="glycosylation" value="5 sites, 1 N-linked glycan (1 site), 1 O-linked glycan (3 sites)"/>
</dbReference>
<dbReference type="iPTMnet" id="Q9NS91"/>
<dbReference type="MetOSite" id="Q9NS91"/>
<dbReference type="PhosphoSitePlus" id="Q9NS91"/>
<dbReference type="SwissPalm" id="Q9NS91"/>
<dbReference type="BioMuta" id="RAD18"/>
<dbReference type="DMDM" id="313104165"/>
<dbReference type="CPTAC" id="CPTAC-3246"/>
<dbReference type="CPTAC" id="CPTAC-3247"/>
<dbReference type="CPTAC" id="CPTAC-3285"/>
<dbReference type="CPTAC" id="CPTAC-939"/>
<dbReference type="CPTAC" id="CPTAC-940"/>
<dbReference type="jPOST" id="Q9NS91"/>
<dbReference type="MassIVE" id="Q9NS91"/>
<dbReference type="PaxDb" id="9606-ENSP00000264926"/>
<dbReference type="PeptideAtlas" id="Q9NS91"/>
<dbReference type="ProteomicsDB" id="82515"/>
<dbReference type="Pumba" id="Q9NS91"/>
<dbReference type="Antibodypedia" id="10148">
    <property type="antibodies" value="426 antibodies from 40 providers"/>
</dbReference>
<dbReference type="CPTC" id="Q9NS91">
    <property type="antibodies" value="5 antibodies"/>
</dbReference>
<dbReference type="DNASU" id="56852"/>
<dbReference type="Ensembl" id="ENST00000264926.7">
    <property type="protein sequence ID" value="ENSP00000264926.2"/>
    <property type="gene ID" value="ENSG00000070950.10"/>
</dbReference>
<dbReference type="GeneID" id="56852"/>
<dbReference type="KEGG" id="hsa:56852"/>
<dbReference type="MANE-Select" id="ENST00000264926.7">
    <property type="protein sequence ID" value="ENSP00000264926.2"/>
    <property type="RefSeq nucleotide sequence ID" value="NM_020165.4"/>
    <property type="RefSeq protein sequence ID" value="NP_064550.3"/>
</dbReference>
<dbReference type="UCSC" id="uc003brd.4">
    <property type="organism name" value="human"/>
</dbReference>
<dbReference type="AGR" id="HGNC:18278"/>
<dbReference type="CTD" id="56852"/>
<dbReference type="DisGeNET" id="56852"/>
<dbReference type="GeneCards" id="RAD18"/>
<dbReference type="HGNC" id="HGNC:18278">
    <property type="gene designation" value="RAD18"/>
</dbReference>
<dbReference type="HPA" id="ENSG00000070950">
    <property type="expression patterns" value="Low tissue specificity"/>
</dbReference>
<dbReference type="MIM" id="605256">
    <property type="type" value="gene"/>
</dbReference>
<dbReference type="neXtProt" id="NX_Q9NS91"/>
<dbReference type="OpenTargets" id="ENSG00000070950"/>
<dbReference type="PharmGKB" id="PA134912253"/>
<dbReference type="VEuPathDB" id="HostDB:ENSG00000070950"/>
<dbReference type="eggNOG" id="KOG0287">
    <property type="taxonomic scope" value="Eukaryota"/>
</dbReference>
<dbReference type="GeneTree" id="ENSGT00390000011230"/>
<dbReference type="InParanoid" id="Q9NS91"/>
<dbReference type="OMA" id="IPNTGPR"/>
<dbReference type="OrthoDB" id="9049620at2759"/>
<dbReference type="PAN-GO" id="Q9NS91">
    <property type="GO annotations" value="4 GO annotations based on evolutionary models"/>
</dbReference>
<dbReference type="PhylomeDB" id="Q9NS91"/>
<dbReference type="TreeFam" id="TF101214"/>
<dbReference type="PathwayCommons" id="Q9NS91"/>
<dbReference type="Reactome" id="R-HSA-110314">
    <property type="pathway name" value="Recognition of DNA damage by PCNA-containing replication complex"/>
</dbReference>
<dbReference type="Reactome" id="R-HSA-8866654">
    <property type="pathway name" value="E3 ubiquitin ligases ubiquitinate target proteins"/>
</dbReference>
<dbReference type="SignaLink" id="Q9NS91"/>
<dbReference type="SIGNOR" id="Q9NS91"/>
<dbReference type="UniPathway" id="UPA00143"/>
<dbReference type="BioGRID-ORCS" id="56852">
    <property type="hits" value="52 hits in 1199 CRISPR screens"/>
</dbReference>
<dbReference type="ChiTaRS" id="RAD18">
    <property type="organism name" value="human"/>
</dbReference>
<dbReference type="EvolutionaryTrace" id="Q9NS91"/>
<dbReference type="GeneWiki" id="RAD18"/>
<dbReference type="GenomeRNAi" id="56852"/>
<dbReference type="Pharos" id="Q9NS91">
    <property type="development level" value="Tbio"/>
</dbReference>
<dbReference type="PRO" id="PR:Q9NS91"/>
<dbReference type="Proteomes" id="UP000005640">
    <property type="component" value="Chromosome 3"/>
</dbReference>
<dbReference type="RNAct" id="Q9NS91">
    <property type="molecule type" value="protein"/>
</dbReference>
<dbReference type="Bgee" id="ENSG00000070950">
    <property type="expression patterns" value="Expressed in male germ line stem cell (sensu Vertebrata) in testis and 145 other cell types or tissues"/>
</dbReference>
<dbReference type="ExpressionAtlas" id="Q9NS91">
    <property type="expression patterns" value="baseline and differential"/>
</dbReference>
<dbReference type="GO" id="GO:0005813">
    <property type="term" value="C:centrosome"/>
    <property type="evidence" value="ECO:0000314"/>
    <property type="project" value="UniProtKB"/>
</dbReference>
<dbReference type="GO" id="GO:0005737">
    <property type="term" value="C:cytoplasm"/>
    <property type="evidence" value="ECO:0007669"/>
    <property type="project" value="UniProtKB-KW"/>
</dbReference>
<dbReference type="GO" id="GO:0016604">
    <property type="term" value="C:nuclear body"/>
    <property type="evidence" value="ECO:0000314"/>
    <property type="project" value="HPA"/>
</dbReference>
<dbReference type="GO" id="GO:0042405">
    <property type="term" value="C:nuclear inclusion body"/>
    <property type="evidence" value="ECO:0000314"/>
    <property type="project" value="UniProtKB"/>
</dbReference>
<dbReference type="GO" id="GO:0005654">
    <property type="term" value="C:nucleoplasm"/>
    <property type="evidence" value="ECO:0000314"/>
    <property type="project" value="HPA"/>
</dbReference>
<dbReference type="GO" id="GO:0005634">
    <property type="term" value="C:nucleus"/>
    <property type="evidence" value="ECO:0000314"/>
    <property type="project" value="UniProtKB"/>
</dbReference>
<dbReference type="GO" id="GO:0097505">
    <property type="term" value="C:Rad6-Rad18 complex"/>
    <property type="evidence" value="ECO:0000318"/>
    <property type="project" value="GO_Central"/>
</dbReference>
<dbReference type="GO" id="GO:0005657">
    <property type="term" value="C:replication fork"/>
    <property type="evidence" value="ECO:0000314"/>
    <property type="project" value="UniProtKB"/>
</dbReference>
<dbReference type="GO" id="GO:0035861">
    <property type="term" value="C:site of double-strand break"/>
    <property type="evidence" value="ECO:0000314"/>
    <property type="project" value="UniProtKB"/>
</dbReference>
<dbReference type="GO" id="GO:0003684">
    <property type="term" value="F:damaged DNA binding"/>
    <property type="evidence" value="ECO:0000303"/>
    <property type="project" value="UniProtKB"/>
</dbReference>
<dbReference type="GO" id="GO:0042802">
    <property type="term" value="F:identical protein binding"/>
    <property type="evidence" value="ECO:0000314"/>
    <property type="project" value="MGI"/>
</dbReference>
<dbReference type="GO" id="GO:0031593">
    <property type="term" value="F:polyubiquitin modification-dependent protein binding"/>
    <property type="evidence" value="ECO:0000314"/>
    <property type="project" value="UniProtKB"/>
</dbReference>
<dbReference type="GO" id="GO:0044877">
    <property type="term" value="F:protein-containing complex binding"/>
    <property type="evidence" value="ECO:0000353"/>
    <property type="project" value="UniProtKB"/>
</dbReference>
<dbReference type="GO" id="GO:0003697">
    <property type="term" value="F:single-stranded DNA binding"/>
    <property type="evidence" value="ECO:0007669"/>
    <property type="project" value="InterPro"/>
</dbReference>
<dbReference type="GO" id="GO:0061630">
    <property type="term" value="F:ubiquitin protein ligase activity"/>
    <property type="evidence" value="ECO:0007669"/>
    <property type="project" value="InterPro"/>
</dbReference>
<dbReference type="GO" id="GO:0031625">
    <property type="term" value="F:ubiquitin protein ligase binding"/>
    <property type="evidence" value="ECO:0000353"/>
    <property type="project" value="UniProtKB"/>
</dbReference>
<dbReference type="GO" id="GO:0000403">
    <property type="term" value="F:Y-form DNA binding"/>
    <property type="evidence" value="ECO:0000314"/>
    <property type="project" value="UniProtKB"/>
</dbReference>
<dbReference type="GO" id="GO:0008270">
    <property type="term" value="F:zinc ion binding"/>
    <property type="evidence" value="ECO:0007669"/>
    <property type="project" value="UniProtKB-KW"/>
</dbReference>
<dbReference type="GO" id="GO:0006974">
    <property type="term" value="P:DNA damage response"/>
    <property type="evidence" value="ECO:0000314"/>
    <property type="project" value="UniProtKB"/>
</dbReference>
<dbReference type="GO" id="GO:0006281">
    <property type="term" value="P:DNA repair"/>
    <property type="evidence" value="ECO:0000303"/>
    <property type="project" value="UniProtKB"/>
</dbReference>
<dbReference type="GO" id="GO:0051984">
    <property type="term" value="P:positive regulation of chromosome segregation"/>
    <property type="evidence" value="ECO:0000315"/>
    <property type="project" value="UniProtKB"/>
</dbReference>
<dbReference type="GO" id="GO:0006301">
    <property type="term" value="P:postreplication repair"/>
    <property type="evidence" value="ECO:0000318"/>
    <property type="project" value="GO_Central"/>
</dbReference>
<dbReference type="GO" id="GO:0051865">
    <property type="term" value="P:protein autoubiquitination"/>
    <property type="evidence" value="ECO:0000314"/>
    <property type="project" value="MGI"/>
</dbReference>
<dbReference type="GO" id="GO:0006513">
    <property type="term" value="P:protein monoubiquitination"/>
    <property type="evidence" value="ECO:0000318"/>
    <property type="project" value="GO_Central"/>
</dbReference>
<dbReference type="CDD" id="cd16529">
    <property type="entry name" value="RING-HC_RAD18"/>
    <property type="match status" value="1"/>
</dbReference>
<dbReference type="FunFam" id="3.30.160.60:FF:000331">
    <property type="entry name" value="E3 ubiquitin-protein ligase RAD18"/>
    <property type="match status" value="1"/>
</dbReference>
<dbReference type="FunFam" id="3.30.40.10:FF:000172">
    <property type="entry name" value="E3 ubiquitin-protein ligase RAD18"/>
    <property type="match status" value="1"/>
</dbReference>
<dbReference type="FunFam" id="1.10.720.30:FF:000024">
    <property type="entry name" value="E3 ubiquitin-protein ligase RAD18 isoform X1"/>
    <property type="match status" value="1"/>
</dbReference>
<dbReference type="Gene3D" id="3.30.160.60">
    <property type="entry name" value="Classic Zinc Finger"/>
    <property type="match status" value="1"/>
</dbReference>
<dbReference type="Gene3D" id="1.10.720.30">
    <property type="entry name" value="SAP domain"/>
    <property type="match status" value="1"/>
</dbReference>
<dbReference type="Gene3D" id="3.30.40.10">
    <property type="entry name" value="Zinc/RING finger domain, C3HC4 (zinc finger)"/>
    <property type="match status" value="1"/>
</dbReference>
<dbReference type="IDEAL" id="IID00588"/>
<dbReference type="InterPro" id="IPR039577">
    <property type="entry name" value="Rad18"/>
</dbReference>
<dbReference type="InterPro" id="IPR006642">
    <property type="entry name" value="Rad18_UBZ4"/>
</dbReference>
<dbReference type="InterPro" id="IPR003034">
    <property type="entry name" value="SAP_dom"/>
</dbReference>
<dbReference type="InterPro" id="IPR036361">
    <property type="entry name" value="SAP_dom_sf"/>
</dbReference>
<dbReference type="InterPro" id="IPR001841">
    <property type="entry name" value="Znf_RING"/>
</dbReference>
<dbReference type="InterPro" id="IPR013083">
    <property type="entry name" value="Znf_RING/FYVE/PHD"/>
</dbReference>
<dbReference type="InterPro" id="IPR017907">
    <property type="entry name" value="Znf_RING_CS"/>
</dbReference>
<dbReference type="PANTHER" id="PTHR14134">
    <property type="entry name" value="E3 UBIQUITIN-PROTEIN LIGASE RAD18"/>
    <property type="match status" value="1"/>
</dbReference>
<dbReference type="PANTHER" id="PTHR14134:SF2">
    <property type="entry name" value="E3 UBIQUITIN-PROTEIN LIGASE RAD18"/>
    <property type="match status" value="1"/>
</dbReference>
<dbReference type="Pfam" id="PF02037">
    <property type="entry name" value="SAP"/>
    <property type="match status" value="1"/>
</dbReference>
<dbReference type="Pfam" id="PF13923">
    <property type="entry name" value="zf-C3HC4_2"/>
    <property type="match status" value="1"/>
</dbReference>
<dbReference type="SMART" id="SM00184">
    <property type="entry name" value="RING"/>
    <property type="match status" value="1"/>
</dbReference>
<dbReference type="SMART" id="SM00513">
    <property type="entry name" value="SAP"/>
    <property type="match status" value="1"/>
</dbReference>
<dbReference type="SMART" id="SM00734">
    <property type="entry name" value="ZnF_Rad18"/>
    <property type="match status" value="1"/>
</dbReference>
<dbReference type="SUPFAM" id="SSF57850">
    <property type="entry name" value="RING/U-box"/>
    <property type="match status" value="1"/>
</dbReference>
<dbReference type="PROSITE" id="PS50800">
    <property type="entry name" value="SAP"/>
    <property type="match status" value="1"/>
</dbReference>
<dbReference type="PROSITE" id="PS00518">
    <property type="entry name" value="ZF_RING_1"/>
    <property type="match status" value="1"/>
</dbReference>
<dbReference type="PROSITE" id="PS50089">
    <property type="entry name" value="ZF_RING_2"/>
    <property type="match status" value="1"/>
</dbReference>
<dbReference type="PROSITE" id="PS51908">
    <property type="entry name" value="ZF_UBZ4"/>
    <property type="match status" value="1"/>
</dbReference>
<gene>
    <name type="primary">RAD18</name>
    <name type="synonym">RNF73</name>
</gene>
<reference key="1">
    <citation type="journal article" date="2000" name="Proc. Natl. Acad. Sci. U.S.A.">
        <title>Dysfunction of human Rad18 results in defective postreplication repair and hypersensitivity to multiple mutagens.</title>
        <authorList>
            <person name="Tateishi S."/>
            <person name="Sakuraba Y."/>
            <person name="Masuyama S."/>
            <person name="Inoue H."/>
            <person name="Yamaizumi M."/>
        </authorList>
    </citation>
    <scope>NUCLEOTIDE SEQUENCE [MRNA]</scope>
    <scope>VARIANT GLN-302</scope>
    <source>
        <tissue>Placenta</tissue>
    </source>
</reference>
<reference key="2">
    <citation type="journal article" date="2000" name="Nucleic Acids Res.">
        <title>The human RAD18 gene product interacts with HHR6A and HHR6B.</title>
        <authorList>
            <person name="Xin H."/>
            <person name="Lin W."/>
            <person name="Sumanasekera W."/>
            <person name="Zhang Y."/>
            <person name="Wu X."/>
            <person name="Wang Z."/>
        </authorList>
    </citation>
    <scope>NUCLEOTIDE SEQUENCE [MRNA]</scope>
    <scope>VARIANT GLN-302</scope>
</reference>
<reference key="3">
    <citation type="submission" date="2000-07" db="EMBL/GenBank/DDBJ databases">
        <title>Identification of human RAD18 (hHR18), a homolog of yeast RAD18.</title>
        <authorList>
            <person name="Jang Y."/>
            <person name="Chae S."/>
        </authorList>
    </citation>
    <scope>NUCLEOTIDE SEQUENCE [MRNA]</scope>
    <scope>VARIANT GLN-302</scope>
</reference>
<reference key="4">
    <citation type="journal article" date="2004" name="Nat. Genet.">
        <title>Complete sequencing and characterization of 21,243 full-length human cDNAs.</title>
        <authorList>
            <person name="Ota T."/>
            <person name="Suzuki Y."/>
            <person name="Nishikawa T."/>
            <person name="Otsuki T."/>
            <person name="Sugiyama T."/>
            <person name="Irie R."/>
            <person name="Wakamatsu A."/>
            <person name="Hayashi K."/>
            <person name="Sato H."/>
            <person name="Nagai K."/>
            <person name="Kimura K."/>
            <person name="Makita H."/>
            <person name="Sekine M."/>
            <person name="Obayashi M."/>
            <person name="Nishi T."/>
            <person name="Shibahara T."/>
            <person name="Tanaka T."/>
            <person name="Ishii S."/>
            <person name="Yamamoto J."/>
            <person name="Saito K."/>
            <person name="Kawai Y."/>
            <person name="Isono Y."/>
            <person name="Nakamura Y."/>
            <person name="Nagahari K."/>
            <person name="Murakami K."/>
            <person name="Yasuda T."/>
            <person name="Iwayanagi T."/>
            <person name="Wagatsuma M."/>
            <person name="Shiratori A."/>
            <person name="Sudo H."/>
            <person name="Hosoiri T."/>
            <person name="Kaku Y."/>
            <person name="Kodaira H."/>
            <person name="Kondo H."/>
            <person name="Sugawara M."/>
            <person name="Takahashi M."/>
            <person name="Kanda K."/>
            <person name="Yokoi T."/>
            <person name="Furuya T."/>
            <person name="Kikkawa E."/>
            <person name="Omura Y."/>
            <person name="Abe K."/>
            <person name="Kamihara K."/>
            <person name="Katsuta N."/>
            <person name="Sato K."/>
            <person name="Tanikawa M."/>
            <person name="Yamazaki M."/>
            <person name="Ninomiya K."/>
            <person name="Ishibashi T."/>
            <person name="Yamashita H."/>
            <person name="Murakawa K."/>
            <person name="Fujimori K."/>
            <person name="Tanai H."/>
            <person name="Kimata M."/>
            <person name="Watanabe M."/>
            <person name="Hiraoka S."/>
            <person name="Chiba Y."/>
            <person name="Ishida S."/>
            <person name="Ono Y."/>
            <person name="Takiguchi S."/>
            <person name="Watanabe S."/>
            <person name="Yosida M."/>
            <person name="Hotuta T."/>
            <person name="Kusano J."/>
            <person name="Kanehori K."/>
            <person name="Takahashi-Fujii A."/>
            <person name="Hara H."/>
            <person name="Tanase T.-O."/>
            <person name="Nomura Y."/>
            <person name="Togiya S."/>
            <person name="Komai F."/>
            <person name="Hara R."/>
            <person name="Takeuchi K."/>
            <person name="Arita M."/>
            <person name="Imose N."/>
            <person name="Musashino K."/>
            <person name="Yuuki H."/>
            <person name="Oshima A."/>
            <person name="Sasaki N."/>
            <person name="Aotsuka S."/>
            <person name="Yoshikawa Y."/>
            <person name="Matsunawa H."/>
            <person name="Ichihara T."/>
            <person name="Shiohata N."/>
            <person name="Sano S."/>
            <person name="Moriya S."/>
            <person name="Momiyama H."/>
            <person name="Satoh N."/>
            <person name="Takami S."/>
            <person name="Terashima Y."/>
            <person name="Suzuki O."/>
            <person name="Nakagawa S."/>
            <person name="Senoh A."/>
            <person name="Mizoguchi H."/>
            <person name="Goto Y."/>
            <person name="Shimizu F."/>
            <person name="Wakebe H."/>
            <person name="Hishigaki H."/>
            <person name="Watanabe T."/>
            <person name="Sugiyama A."/>
            <person name="Takemoto M."/>
            <person name="Kawakami B."/>
            <person name="Yamazaki M."/>
            <person name="Watanabe K."/>
            <person name="Kumagai A."/>
            <person name="Itakura S."/>
            <person name="Fukuzumi Y."/>
            <person name="Fujimori Y."/>
            <person name="Komiyama M."/>
            <person name="Tashiro H."/>
            <person name="Tanigami A."/>
            <person name="Fujiwara T."/>
            <person name="Ono T."/>
            <person name="Yamada K."/>
            <person name="Fujii Y."/>
            <person name="Ozaki K."/>
            <person name="Hirao M."/>
            <person name="Ohmori Y."/>
            <person name="Kawabata A."/>
            <person name="Hikiji T."/>
            <person name="Kobatake N."/>
            <person name="Inagaki H."/>
            <person name="Ikema Y."/>
            <person name="Okamoto S."/>
            <person name="Okitani R."/>
            <person name="Kawakami T."/>
            <person name="Noguchi S."/>
            <person name="Itoh T."/>
            <person name="Shigeta K."/>
            <person name="Senba T."/>
            <person name="Matsumura K."/>
            <person name="Nakajima Y."/>
            <person name="Mizuno T."/>
            <person name="Morinaga M."/>
            <person name="Sasaki M."/>
            <person name="Togashi T."/>
            <person name="Oyama M."/>
            <person name="Hata H."/>
            <person name="Watanabe M."/>
            <person name="Komatsu T."/>
            <person name="Mizushima-Sugano J."/>
            <person name="Satoh T."/>
            <person name="Shirai Y."/>
            <person name="Takahashi Y."/>
            <person name="Nakagawa K."/>
            <person name="Okumura K."/>
            <person name="Nagase T."/>
            <person name="Nomura N."/>
            <person name="Kikuchi H."/>
            <person name="Masuho Y."/>
            <person name="Yamashita R."/>
            <person name="Nakai K."/>
            <person name="Yada T."/>
            <person name="Nakamura Y."/>
            <person name="Ohara O."/>
            <person name="Isogai T."/>
            <person name="Sugano S."/>
        </authorList>
    </citation>
    <scope>NUCLEOTIDE SEQUENCE [LARGE SCALE MRNA]</scope>
    <scope>VARIANT GLN-302</scope>
</reference>
<reference key="5">
    <citation type="submission" date="2005-03" db="EMBL/GenBank/DDBJ databases">
        <authorList>
            <consortium name="NIEHS SNPs program"/>
        </authorList>
    </citation>
    <scope>NUCLEOTIDE SEQUENCE [GENOMIC DNA]</scope>
    <scope>VARIANTS ALA-6; GLN-302 AND VAL-307</scope>
</reference>
<reference key="6">
    <citation type="journal article" date="2006" name="Nature">
        <title>The DNA sequence, annotation and analysis of human chromosome 3.</title>
        <authorList>
            <person name="Muzny D.M."/>
            <person name="Scherer S.E."/>
            <person name="Kaul R."/>
            <person name="Wang J."/>
            <person name="Yu J."/>
            <person name="Sudbrak R."/>
            <person name="Buhay C.J."/>
            <person name="Chen R."/>
            <person name="Cree A."/>
            <person name="Ding Y."/>
            <person name="Dugan-Rocha S."/>
            <person name="Gill R."/>
            <person name="Gunaratne P."/>
            <person name="Harris R.A."/>
            <person name="Hawes A.C."/>
            <person name="Hernandez J."/>
            <person name="Hodgson A.V."/>
            <person name="Hume J."/>
            <person name="Jackson A."/>
            <person name="Khan Z.M."/>
            <person name="Kovar-Smith C."/>
            <person name="Lewis L.R."/>
            <person name="Lozado R.J."/>
            <person name="Metzker M.L."/>
            <person name="Milosavljevic A."/>
            <person name="Miner G.R."/>
            <person name="Morgan M.B."/>
            <person name="Nazareth L.V."/>
            <person name="Scott G."/>
            <person name="Sodergren E."/>
            <person name="Song X.-Z."/>
            <person name="Steffen D."/>
            <person name="Wei S."/>
            <person name="Wheeler D.A."/>
            <person name="Wright M.W."/>
            <person name="Worley K.C."/>
            <person name="Yuan Y."/>
            <person name="Zhang Z."/>
            <person name="Adams C.Q."/>
            <person name="Ansari-Lari M.A."/>
            <person name="Ayele M."/>
            <person name="Brown M.J."/>
            <person name="Chen G."/>
            <person name="Chen Z."/>
            <person name="Clendenning J."/>
            <person name="Clerc-Blankenburg K.P."/>
            <person name="Chen R."/>
            <person name="Chen Z."/>
            <person name="Davis C."/>
            <person name="Delgado O."/>
            <person name="Dinh H.H."/>
            <person name="Dong W."/>
            <person name="Draper H."/>
            <person name="Ernst S."/>
            <person name="Fu G."/>
            <person name="Gonzalez-Garay M.L."/>
            <person name="Garcia D.K."/>
            <person name="Gillett W."/>
            <person name="Gu J."/>
            <person name="Hao B."/>
            <person name="Haugen E."/>
            <person name="Havlak P."/>
            <person name="He X."/>
            <person name="Hennig S."/>
            <person name="Hu S."/>
            <person name="Huang W."/>
            <person name="Jackson L.R."/>
            <person name="Jacob L.S."/>
            <person name="Kelly S.H."/>
            <person name="Kube M."/>
            <person name="Levy R."/>
            <person name="Li Z."/>
            <person name="Liu B."/>
            <person name="Liu J."/>
            <person name="Liu W."/>
            <person name="Lu J."/>
            <person name="Maheshwari M."/>
            <person name="Nguyen B.-V."/>
            <person name="Okwuonu G.O."/>
            <person name="Palmeiri A."/>
            <person name="Pasternak S."/>
            <person name="Perez L.M."/>
            <person name="Phelps K.A."/>
            <person name="Plopper F.J."/>
            <person name="Qiang B."/>
            <person name="Raymond C."/>
            <person name="Rodriguez R."/>
            <person name="Saenphimmachak C."/>
            <person name="Santibanez J."/>
            <person name="Shen H."/>
            <person name="Shen Y."/>
            <person name="Subramanian S."/>
            <person name="Tabor P.E."/>
            <person name="Verduzco D."/>
            <person name="Waldron L."/>
            <person name="Wang J."/>
            <person name="Wang J."/>
            <person name="Wang Q."/>
            <person name="Williams G.A."/>
            <person name="Wong G.K.-S."/>
            <person name="Yao Z."/>
            <person name="Zhang J."/>
            <person name="Zhang X."/>
            <person name="Zhao G."/>
            <person name="Zhou J."/>
            <person name="Zhou Y."/>
            <person name="Nelson D."/>
            <person name="Lehrach H."/>
            <person name="Reinhardt R."/>
            <person name="Naylor S.L."/>
            <person name="Yang H."/>
            <person name="Olson M."/>
            <person name="Weinstock G."/>
            <person name="Gibbs R.A."/>
        </authorList>
    </citation>
    <scope>NUCLEOTIDE SEQUENCE [LARGE SCALE GENOMIC DNA]</scope>
</reference>
<reference key="7">
    <citation type="journal article" date="2004" name="Genome Res.">
        <title>The status, quality, and expansion of the NIH full-length cDNA project: the Mammalian Gene Collection (MGC).</title>
        <authorList>
            <consortium name="The MGC Project Team"/>
        </authorList>
    </citation>
    <scope>NUCLEOTIDE SEQUENCE [LARGE SCALE MRNA]</scope>
    <scope>VARIANT GLN-302</scope>
    <source>
        <tissue>Placenta</tissue>
    </source>
</reference>
<reference key="8">
    <citation type="journal article" date="2005" name="Mol. Cell. Biol.">
        <title>BRCTx is a novel, highly conserved RAD18-interacting protein.</title>
        <authorList>
            <person name="Adams D.J."/>
            <person name="van der Weyden L."/>
            <person name="Gergely F.V."/>
            <person name="Arends M.J."/>
            <person name="Ng B.L."/>
            <person name="Tannahill D."/>
            <person name="Kanaar R."/>
            <person name="Markus A."/>
            <person name="Morris B.J."/>
            <person name="Bradley A."/>
        </authorList>
    </citation>
    <scope>INTERACTION WITH SLF1</scope>
    <scope>SUBCELLULAR LOCATION</scope>
</reference>
<reference key="9">
    <citation type="journal article" date="2006" name="Cell">
        <title>Global, in vivo, and site-specific phosphorylation dynamics in signaling networks.</title>
        <authorList>
            <person name="Olsen J.V."/>
            <person name="Blagoev B."/>
            <person name="Gnad F."/>
            <person name="Macek B."/>
            <person name="Kumar C."/>
            <person name="Mortensen P."/>
            <person name="Mann M."/>
        </authorList>
    </citation>
    <scope>PHOSPHORYLATION [LARGE SCALE ANALYSIS] AT SER-99</scope>
    <scope>IDENTIFICATION BY MASS SPECTROMETRY [LARGE SCALE ANALYSIS]</scope>
    <source>
        <tissue>Cervix carcinoma</tissue>
    </source>
</reference>
<reference key="10">
    <citation type="journal article" date="2006" name="J. Cell Biol.">
        <title>Human SHPRH suppresses genomic instability through proliferating cell nuclear antigen polyubiquitination.</title>
        <authorList>
            <person name="Motegi A."/>
            <person name="Sood R."/>
            <person name="Moinova H."/>
            <person name="Markowitz S.D."/>
            <person name="Liu P.P."/>
            <person name="Myung K."/>
        </authorList>
    </citation>
    <scope>INTERACTION WITH SHPRH</scope>
</reference>
<reference key="11">
    <citation type="journal article" date="2006" name="Nat. Biotechnol.">
        <title>A probability-based approach for high-throughput protein phosphorylation analysis and site localization.</title>
        <authorList>
            <person name="Beausoleil S.A."/>
            <person name="Villen J."/>
            <person name="Gerber S.A."/>
            <person name="Rush J."/>
            <person name="Gygi S.P."/>
        </authorList>
    </citation>
    <scope>PHOSPHORYLATION [LARGE SCALE ANALYSIS] AT SER-471</scope>
    <scope>IDENTIFICATION BY MASS SPECTROMETRY [LARGE SCALE ANALYSIS]</scope>
    <source>
        <tissue>Cervix carcinoma</tissue>
    </source>
</reference>
<reference key="12">
    <citation type="journal article" date="2006" name="Proc. Natl. Acad. Sci. U.S.A.">
        <title>Human SHPRH is a ubiquitin ligase for Mms2-Ubc13-dependent polyubiquitylation of proliferating cell nuclear antigen.</title>
        <authorList>
            <person name="Unk I."/>
            <person name="Hajdu I."/>
            <person name="Fatyol K."/>
            <person name="Szakal B."/>
            <person name="Blastyak A."/>
            <person name="Bermudez V."/>
            <person name="Hurwitz J."/>
            <person name="Prakash L."/>
            <person name="Prakash S."/>
            <person name="Haracska L."/>
        </authorList>
    </citation>
    <scope>FUNCTION</scope>
    <scope>INTERACTION WITH SHPRH</scope>
</reference>
<reference key="13">
    <citation type="journal article" date="2008" name="J. Proteome Res.">
        <title>Combining protein-based IMAC, peptide-based IMAC, and MudPIT for efficient phosphoproteomic analysis.</title>
        <authorList>
            <person name="Cantin G.T."/>
            <person name="Yi W."/>
            <person name="Lu B."/>
            <person name="Park S.K."/>
            <person name="Xu T."/>
            <person name="Lee J.-D."/>
            <person name="Yates J.R. III"/>
        </authorList>
    </citation>
    <scope>PHOSPHORYLATION [LARGE SCALE ANALYSIS] AT SER-99</scope>
    <scope>IDENTIFICATION BY MASS SPECTROMETRY [LARGE SCALE ANALYSIS]</scope>
    <source>
        <tissue>Cervix carcinoma</tissue>
    </source>
</reference>
<reference key="14">
    <citation type="journal article" date="2008" name="Proc. Natl. Acad. Sci. U.S.A.">
        <title>A quantitative atlas of mitotic phosphorylation.</title>
        <authorList>
            <person name="Dephoure N."/>
            <person name="Zhou C."/>
            <person name="Villen J."/>
            <person name="Beausoleil S.A."/>
            <person name="Bakalarski C.E."/>
            <person name="Elledge S.J."/>
            <person name="Gygi S.P."/>
        </authorList>
    </citation>
    <scope>PHOSPHORYLATION [LARGE SCALE ANALYSIS] AT SER-99; SER-103; THR-118 AND SER-164</scope>
    <scope>IDENTIFICATION BY MASS SPECTROMETRY [LARGE SCALE ANALYSIS]</scope>
    <source>
        <tissue>Cervix carcinoma</tissue>
    </source>
</reference>
<reference key="15">
    <citation type="journal article" date="2008" name="Proc. Natl. Acad. Sci. U.S.A.">
        <title>Human HLTF functions as a ubiquitin ligase for proliferating cell nuclear antigen polyubiquitination.</title>
        <authorList>
            <person name="Unk I."/>
            <person name="Hajdu I."/>
            <person name="Fatyol K."/>
            <person name="Hurwitz J."/>
            <person name="Yoon J.-H."/>
            <person name="Prakash L."/>
            <person name="Prakash S."/>
            <person name="Haracska L."/>
        </authorList>
    </citation>
    <scope>INTERACTION WITH HLTF</scope>
</reference>
<reference key="16">
    <citation type="journal article" date="2008" name="Proc. Natl. Acad. Sci. U.S.A.">
        <title>Polyubiquitination of proliferating cell nuclear antigen by HLTF and SHPRH prevents genomic instability from stalled replication forks.</title>
        <authorList>
            <person name="Motegi A."/>
            <person name="Liaw H.-J."/>
            <person name="Lee K.-Y."/>
            <person name="Roest H.P."/>
            <person name="Maas A."/>
            <person name="Wu X."/>
            <person name="Moinova H."/>
            <person name="Markowitz S.D."/>
            <person name="Ding H."/>
            <person name="Hoeijmakers J.H.J."/>
            <person name="Myung K."/>
        </authorList>
    </citation>
    <scope>INTERACTION WITH HLTF</scope>
</reference>
<reference key="17">
    <citation type="journal article" date="2009" name="Anal. Chem.">
        <title>Lys-N and trypsin cover complementary parts of the phosphoproteome in a refined SCX-based approach.</title>
        <authorList>
            <person name="Gauci S."/>
            <person name="Helbig A.O."/>
            <person name="Slijper M."/>
            <person name="Krijgsveld J."/>
            <person name="Heck A.J."/>
            <person name="Mohammed S."/>
        </authorList>
    </citation>
    <scope>IDENTIFICATION BY MASS SPECTROMETRY [LARGE SCALE ANALYSIS]</scope>
</reference>
<reference key="18">
    <citation type="journal article" date="2009" name="Sci. Signal.">
        <title>Quantitative phosphoproteomic analysis of T cell receptor signaling reveals system-wide modulation of protein-protein interactions.</title>
        <authorList>
            <person name="Mayya V."/>
            <person name="Lundgren D.H."/>
            <person name="Hwang S.-I."/>
            <person name="Rezaul K."/>
            <person name="Wu L."/>
            <person name="Eng J.K."/>
            <person name="Rodionov V."/>
            <person name="Han D.K."/>
        </authorList>
    </citation>
    <scope>PHOSPHORYLATION [LARGE SCALE ANALYSIS] AT SER-99 AND SER-103</scope>
    <scope>IDENTIFICATION BY MASS SPECTROMETRY [LARGE SCALE ANALYSIS]</scope>
    <source>
        <tissue>Leukemic T-cell</tissue>
    </source>
</reference>
<reference key="19">
    <citation type="journal article" date="2010" name="Sci. Signal.">
        <title>Quantitative phosphoproteomics reveals widespread full phosphorylation site occupancy during mitosis.</title>
        <authorList>
            <person name="Olsen J.V."/>
            <person name="Vermeulen M."/>
            <person name="Santamaria A."/>
            <person name="Kumar C."/>
            <person name="Miller M.L."/>
            <person name="Jensen L.J."/>
            <person name="Gnad F."/>
            <person name="Cox J."/>
            <person name="Jensen T.S."/>
            <person name="Nigg E.A."/>
            <person name="Brunak S."/>
            <person name="Mann M."/>
        </authorList>
    </citation>
    <scope>PHOSPHORYLATION [LARGE SCALE ANALYSIS] AT SER-99 AND SER-471</scope>
    <scope>IDENTIFICATION BY MASS SPECTROMETRY [LARGE SCALE ANALYSIS]</scope>
    <source>
        <tissue>Cervix carcinoma</tissue>
    </source>
</reference>
<reference key="20">
    <citation type="journal article" date="2011" name="Sci. Signal.">
        <title>System-wide temporal characterization of the proteome and phosphoproteome of human embryonic stem cell differentiation.</title>
        <authorList>
            <person name="Rigbolt K.T."/>
            <person name="Prokhorova T.A."/>
            <person name="Akimov V."/>
            <person name="Henningsen J."/>
            <person name="Johansen P.T."/>
            <person name="Kratchmarova I."/>
            <person name="Kassem M."/>
            <person name="Mann M."/>
            <person name="Olsen J.V."/>
            <person name="Blagoev B."/>
        </authorList>
    </citation>
    <scope>PHOSPHORYLATION [LARGE SCALE ANALYSIS] AT SER-99 AND SER-471</scope>
    <scope>IDENTIFICATION BY MASS SPECTROMETRY [LARGE SCALE ANALYSIS]</scope>
</reference>
<reference key="21">
    <citation type="journal article" date="2011" name="Science">
        <title>A DNA damage response screen identifies RHINO, a 9-1-1 and TopBP1 interacting protein required for ATR signaling.</title>
        <authorList>
            <person name="Cotta-Ramusino C."/>
            <person name="McDonald E.R. III"/>
            <person name="Hurov K."/>
            <person name="Sowa M.E."/>
            <person name="Harper J.W."/>
            <person name="Elledge S.J."/>
        </authorList>
    </citation>
    <scope>FUNCTION</scope>
    <scope>IDENTIFICATION BY MASS SPECTROMETRY</scope>
</reference>
<reference key="22">
    <citation type="journal article" date="2012" name="DNA Repair">
        <title>RAD18-BRCTx interaction is required for efficient repair of UV-induced DNA damage.</title>
        <authorList>
            <person name="Liu T."/>
            <person name="Chen H."/>
            <person name="Kim H."/>
            <person name="Huen M.S."/>
            <person name="Chen J."/>
            <person name="Huang J."/>
        </authorList>
    </citation>
    <scope>INTERACTION WITH SLF1</scope>
    <scope>SUBCELLULAR LOCATION</scope>
    <scope>MUTAGENESIS OF SER-442 AND SER-444</scope>
</reference>
<reference key="23">
    <citation type="journal article" date="2012" name="Mol. Cell">
        <title>Tandem protein interaction modules organize the ubiquitin-dependent response to DNA double-strand breaks.</title>
        <authorList>
            <person name="Panier S."/>
            <person name="Ichijima Y."/>
            <person name="Fradet-Turcotte A."/>
            <person name="Leung C.C."/>
            <person name="Kaustov L."/>
            <person name="Arrowsmith C.H."/>
            <person name="Durocher D."/>
        </authorList>
    </citation>
    <scope>UBIQUITIN-BINDING</scope>
    <scope>LR MOTIF</scope>
</reference>
<reference key="24">
    <citation type="journal article" date="2012" name="Mol. Cell">
        <title>Spartan/C1orf124, a reader of PCNA ubiquitylation and a regulator of UV-induced DNA damage response.</title>
        <authorList>
            <person name="Centore R.C."/>
            <person name="Yazinski S.A."/>
            <person name="Tse A."/>
            <person name="Zou L."/>
        </authorList>
    </citation>
    <scope>INTERACTION WITH SPRTN</scope>
</reference>
<reference key="25">
    <citation type="journal article" date="2012" name="Proc. Natl. Acad. Sci. U.S.A.">
        <title>N-terminal acetylome analyses and functional insights of the N-terminal acetyltransferase NatB.</title>
        <authorList>
            <person name="Van Damme P."/>
            <person name="Lasa M."/>
            <person name="Polevoda B."/>
            <person name="Gazquez C."/>
            <person name="Elosegui-Artola A."/>
            <person name="Kim D.S."/>
            <person name="De Juan-Pardo E."/>
            <person name="Demeyer K."/>
            <person name="Hole K."/>
            <person name="Larrea E."/>
            <person name="Timmerman E."/>
            <person name="Prieto J."/>
            <person name="Arnesen T."/>
            <person name="Sherman F."/>
            <person name="Gevaert K."/>
            <person name="Aldabe R."/>
        </authorList>
    </citation>
    <scope>ACETYLATION [LARGE SCALE ANALYSIS] AT MET-1</scope>
    <scope>IDENTIFICATION BY MASS SPECTROMETRY [LARGE SCALE ANALYSIS]</scope>
</reference>
<reference key="26">
    <citation type="journal article" date="2013" name="J. Proteome Res.">
        <title>Toward a comprehensive characterization of a human cancer cell phosphoproteome.</title>
        <authorList>
            <person name="Zhou H."/>
            <person name="Di Palma S."/>
            <person name="Preisinger C."/>
            <person name="Peng M."/>
            <person name="Polat A.N."/>
            <person name="Heck A.J."/>
            <person name="Mohammed S."/>
        </authorList>
    </citation>
    <scope>PHOSPHORYLATION [LARGE SCALE ANALYSIS] AT SER-99; SER-103; THR-118; SER-122; SER-125; SER-142; SER-158; SER-164; SER-322; SER-471 AND SER-483</scope>
    <scope>IDENTIFICATION BY MASS SPECTROMETRY [LARGE SCALE ANALYSIS]</scope>
    <source>
        <tissue>Cervix carcinoma</tissue>
        <tissue>Erythroleukemia</tissue>
    </source>
</reference>
<reference key="27">
    <citation type="journal article" date="2014" name="Nat. Struct. Mol. Biol.">
        <title>Uncovering global SUMOylation signaling networks in a site-specific manner.</title>
        <authorList>
            <person name="Hendriks I.A."/>
            <person name="D'Souza R.C."/>
            <person name="Yang B."/>
            <person name="Verlaan-de Vries M."/>
            <person name="Mann M."/>
            <person name="Vertegaal A.C."/>
        </authorList>
    </citation>
    <scope>SUMOYLATION [LARGE SCALE ANALYSIS] AT LYS-376</scope>
    <scope>IDENTIFICATION BY MASS SPECTROMETRY [LARGE SCALE ANALYSIS]</scope>
</reference>
<reference key="28">
    <citation type="journal article" date="2015" name="Science">
        <title>DNA repair. Proteomics reveals dynamic assembly of repair complexes during bypass of DNA cross-links.</title>
        <authorList>
            <person name="Raeschle M."/>
            <person name="Smeenk G."/>
            <person name="Hansen R.K."/>
            <person name="Temu T."/>
            <person name="Oka Y."/>
            <person name="Hein M.Y."/>
            <person name="Nagaraj N."/>
            <person name="Long D.T."/>
            <person name="Walter J.C."/>
            <person name="Hofmann K."/>
            <person name="Storchova Z."/>
            <person name="Cox J."/>
            <person name="Bekker-Jensen S."/>
            <person name="Mailand N."/>
            <person name="Mann M."/>
        </authorList>
    </citation>
    <scope>INTERACTION WITH SLF1; SLF2 AND SMC5</scope>
    <scope>SUBCELLULAR LOCATION</scope>
    <scope>IDENTIFICATION BY MASS SPECTROMETRY</scope>
    <scope>MUTAGENESIS OF SER-442 AND SER-444</scope>
</reference>
<reference key="29">
    <citation type="journal article" date="2017" name="Nat. Struct. Mol. Biol.">
        <title>Site-specific mapping of the human SUMO proteome reveals co-modification with phosphorylation.</title>
        <authorList>
            <person name="Hendriks I.A."/>
            <person name="Lyon D."/>
            <person name="Young C."/>
            <person name="Jensen L.J."/>
            <person name="Vertegaal A.C."/>
            <person name="Nielsen M.L."/>
        </authorList>
    </citation>
    <scope>SUMOYLATION [LARGE SCALE ANALYSIS] AT LYS-376</scope>
    <scope>IDENTIFICATION BY MASS SPECTROMETRY [LARGE SCALE ANALYSIS]</scope>
</reference>
<reference key="30">
    <citation type="journal article" date="2022" name="Nucleic Acids Res.">
        <title>LncRNA CTBP1-DT-encoded microprotein DDUP sustains DNA damage response signalling to trigger dual DNA repair mechanisms.</title>
        <authorList>
            <person name="Yu R."/>
            <person name="Hu Y."/>
            <person name="Zhang S."/>
            <person name="Li X."/>
            <person name="Tang M."/>
            <person name="Yang M."/>
            <person name="Wu X."/>
            <person name="Li Z."/>
            <person name="Liao X."/>
            <person name="Xu Y."/>
            <person name="Li M."/>
            <person name="Chen S."/>
            <person name="Qian W."/>
            <person name="Gong L.Y."/>
            <person name="Song L."/>
            <person name="Li J."/>
        </authorList>
    </citation>
    <scope>INTERACTION WITH DDUP AND H2AX</scope>
</reference>
<reference key="31">
    <citation type="journal article" date="2011" name="J. Mol. Biol.">
        <title>Symmetry and asymmetry of the RING-RING dimer of Rad18.</title>
        <authorList>
            <person name="Huang A."/>
            <person name="Hibbert R.G."/>
            <person name="de Jong R.N."/>
            <person name="Das D."/>
            <person name="Sixma T.K."/>
            <person name="Boelens R."/>
        </authorList>
    </citation>
    <scope>X-RAY CRYSTALLOGRAPHY (1.8 ANGSTROMS) OF 1-99</scope>
    <scope>SUBUNIT</scope>
    <scope>MUTAGENESIS OF ILE-27</scope>
</reference>
<organism>
    <name type="scientific">Homo sapiens</name>
    <name type="common">Human</name>
    <dbReference type="NCBI Taxonomy" id="9606"/>
    <lineage>
        <taxon>Eukaryota</taxon>
        <taxon>Metazoa</taxon>
        <taxon>Chordata</taxon>
        <taxon>Craniata</taxon>
        <taxon>Vertebrata</taxon>
        <taxon>Euteleostomi</taxon>
        <taxon>Mammalia</taxon>
        <taxon>Eutheria</taxon>
        <taxon>Euarchontoglires</taxon>
        <taxon>Primates</taxon>
        <taxon>Haplorrhini</taxon>
        <taxon>Catarrhini</taxon>
        <taxon>Hominidae</taxon>
        <taxon>Homo</taxon>
    </lineage>
</organism>
<keyword id="KW-0002">3D-structure</keyword>
<keyword id="KW-0007">Acetylation</keyword>
<keyword id="KW-0963">Cytoplasm</keyword>
<keyword id="KW-0206">Cytoskeleton</keyword>
<keyword id="KW-0227">DNA damage</keyword>
<keyword id="KW-0234">DNA repair</keyword>
<keyword id="KW-0238">DNA-binding</keyword>
<keyword id="KW-1017">Isopeptide bond</keyword>
<keyword id="KW-0479">Metal-binding</keyword>
<keyword id="KW-0539">Nucleus</keyword>
<keyword id="KW-0597">Phosphoprotein</keyword>
<keyword id="KW-1267">Proteomics identification</keyword>
<keyword id="KW-1185">Reference proteome</keyword>
<keyword id="KW-0808">Transferase</keyword>
<keyword id="KW-0832">Ubl conjugation</keyword>
<keyword id="KW-0833">Ubl conjugation pathway</keyword>
<keyword id="KW-0862">Zinc</keyword>
<keyword id="KW-0863">Zinc-finger</keyword>
<evidence type="ECO:0000255" key="1">
    <source>
        <dbReference type="PROSITE-ProRule" id="PRU00175"/>
    </source>
</evidence>
<evidence type="ECO:0000255" key="2">
    <source>
        <dbReference type="PROSITE-ProRule" id="PRU00186"/>
    </source>
</evidence>
<evidence type="ECO:0000255" key="3">
    <source>
        <dbReference type="PROSITE-ProRule" id="PRU01256"/>
    </source>
</evidence>
<evidence type="ECO:0000256" key="4">
    <source>
        <dbReference type="SAM" id="MobiDB-lite"/>
    </source>
</evidence>
<evidence type="ECO:0000269" key="5">
    <source>
    </source>
</evidence>
<evidence type="ECO:0000269" key="6">
    <source>
    </source>
</evidence>
<evidence type="ECO:0000269" key="7">
    <source>
    </source>
</evidence>
<evidence type="ECO:0000269" key="8">
    <source>
    </source>
</evidence>
<evidence type="ECO:0000269" key="9">
    <source>
    </source>
</evidence>
<evidence type="ECO:0000269" key="10">
    <source>
    </source>
</evidence>
<evidence type="ECO:0000269" key="11">
    <source>
    </source>
</evidence>
<evidence type="ECO:0000269" key="12">
    <source>
    </source>
</evidence>
<evidence type="ECO:0000269" key="13">
    <source>
    </source>
</evidence>
<evidence type="ECO:0000269" key="14">
    <source>
    </source>
</evidence>
<evidence type="ECO:0000269" key="15">
    <source>
    </source>
</evidence>
<evidence type="ECO:0000269" key="16">
    <source>
    </source>
</evidence>
<evidence type="ECO:0000269" key="17">
    <source>
    </source>
</evidence>
<evidence type="ECO:0000269" key="18">
    <source>
    </source>
</evidence>
<evidence type="ECO:0000269" key="19">
    <source>
    </source>
</evidence>
<evidence type="ECO:0000269" key="20">
    <source ref="3"/>
</evidence>
<evidence type="ECO:0000269" key="21">
    <source ref="5"/>
</evidence>
<evidence type="ECO:0000305" key="22"/>
<evidence type="ECO:0007744" key="23">
    <source>
    </source>
</evidence>
<evidence type="ECO:0007744" key="24">
    <source>
    </source>
</evidence>
<evidence type="ECO:0007744" key="25">
    <source>
    </source>
</evidence>
<evidence type="ECO:0007744" key="26">
    <source>
    </source>
</evidence>
<evidence type="ECO:0007744" key="27">
    <source>
    </source>
</evidence>
<evidence type="ECO:0007744" key="28">
    <source>
    </source>
</evidence>
<evidence type="ECO:0007744" key="29">
    <source>
    </source>
</evidence>
<evidence type="ECO:0007744" key="30">
    <source>
    </source>
</evidence>
<evidence type="ECO:0007744" key="31">
    <source>
    </source>
</evidence>
<evidence type="ECO:0007744" key="32">
    <source>
    </source>
</evidence>
<evidence type="ECO:0007744" key="33">
    <source>
    </source>
</evidence>
<evidence type="ECO:0007829" key="34">
    <source>
        <dbReference type="PDB" id="2MRE"/>
    </source>
</evidence>
<evidence type="ECO:0007829" key="35">
    <source>
        <dbReference type="PDB" id="2Y43"/>
    </source>
</evidence>
<evidence type="ECO:0007829" key="36">
    <source>
        <dbReference type="PDB" id="2YBF"/>
    </source>
</evidence>
<evidence type="ECO:0007829" key="37">
    <source>
        <dbReference type="PDB" id="5VF0"/>
    </source>
</evidence>
<evidence type="ECO:0007829" key="38">
    <source>
        <dbReference type="PDB" id="8IR4"/>
    </source>
</evidence>
<name>RAD18_HUMAN</name>
<comment type="function">
    <text evidence="10 15">E3 ubiquitin-protein ligase involved in postreplication repair of UV-damaged DNA. Postreplication repair functions in gap-filling of a daughter strand on replication of damaged DNA. Associates to the E2 ubiquitin conjugating enzyme UBE2B to form the UBE2B-RAD18 ubiquitin ligase complex involved in mono-ubiquitination of DNA-associated PCNA on 'Lys-164'. Has ssDNA binding activity.</text>
</comment>
<comment type="catalytic activity">
    <reaction>
        <text>S-ubiquitinyl-[E2 ubiquitin-conjugating enzyme]-L-cysteine + [acceptor protein]-L-lysine = [E2 ubiquitin-conjugating enzyme]-L-cysteine + N(6)-ubiquitinyl-[acceptor protein]-L-lysine.</text>
        <dbReference type="EC" id="2.3.2.27"/>
    </reaction>
</comment>
<comment type="pathway">
    <text>Protein modification; protein ubiquitination.</text>
</comment>
<comment type="subunit">
    <text evidence="9 10 11 12 13 14 16 17 18 19">Homodimer (PubMed:21549715). Interacts with UBE2A and UBE2B, one homodimer binding one molecule of UBE2B. Interacts with SHPRH (PubMed:17108083, PubMed:17130289). Interacts with HLTF (PubMed:18316726, PubMed:18719106). Interacts with SPRTN; leading to enhance chromatin association of RAD18 and RAD18-mediated PCNA ubiquitination and translesion DNA synthesis (PubMed:22681887). Interacts (via C-terminus and phosphorylated form) with SLF1 (via BRCT domains); this interaction is required for efficient repair of UV-induced DNA damage (PubMed:15632077, PubMed:22036607, PubMed:25931565). Interacts with SLF2 (PubMed:25931565). Interacts with SMC5; this interaction is increased in a SLF1 or SLF2-dependent manner (PubMed:25931565). Interacts with DNA damage up-regulated protein DDUP (PubMed:35849344). Forms a complex with DDUP and H2AX following DDUP phosphorylation (PubMed:35849344).</text>
</comment>
<comment type="interaction">
    <interactant intactId="EBI-2339393">
        <id>Q9NS91</id>
    </interactant>
    <interactant intactId="EBI-2875665">
        <id>Q96B67</id>
        <label>ARRDC3</label>
    </interactant>
    <organismsDiffer>false</organismsDiffer>
    <experiments>3</experiments>
</comment>
<comment type="interaction">
    <interactant intactId="EBI-2339393">
        <id>Q9NS91</id>
    </interactant>
    <interactant intactId="EBI-930964">
        <id>P54253</id>
        <label>ATXN1</label>
    </interactant>
    <organismsDiffer>false</organismsDiffer>
    <experiments>6</experiments>
</comment>
<comment type="interaction">
    <interactant intactId="EBI-2339393">
        <id>Q9NS91</id>
    </interactant>
    <interactant intactId="EBI-724310">
        <id>Q15038</id>
        <label>DAZAP2</label>
    </interactant>
    <organismsDiffer>false</organismsDiffer>
    <experiments>3</experiments>
</comment>
<comment type="interaction">
    <interactant intactId="EBI-2339393">
        <id>Q9NS91</id>
    </interactant>
    <interactant intactId="EBI-618309">
        <id>Q08379</id>
        <label>GOLGA2</label>
    </interactant>
    <organismsDiffer>false</organismsDiffer>
    <experiments>3</experiments>
</comment>
<comment type="interaction">
    <interactant intactId="EBI-2339393">
        <id>Q9NS91</id>
    </interactant>
    <interactant intactId="EBI-1045161">
        <id>Q14527</id>
        <label>HLTF</label>
    </interactant>
    <organismsDiffer>false</organismsDiffer>
    <experiments>3</experiments>
</comment>
<comment type="interaction">
    <interactant intactId="EBI-2339393">
        <id>Q9NS91</id>
    </interactant>
    <interactant intactId="EBI-743122">
        <id>P43358</id>
        <label>MAGEA4</label>
    </interactant>
    <organismsDiffer>false</organismsDiffer>
    <experiments>6</experiments>
</comment>
<comment type="interaction">
    <interactant intactId="EBI-2339393">
        <id>Q9NS91</id>
    </interactant>
    <interactant intactId="EBI-374957">
        <id>Q13416</id>
        <label>ORC2</label>
    </interactant>
    <organismsDiffer>false</organismsDiffer>
    <experiments>3</experiments>
</comment>
<comment type="interaction">
    <interactant intactId="EBI-2339393">
        <id>Q9NS91</id>
    </interactant>
    <interactant intactId="EBI-712290">
        <id>O14737</id>
        <label>PDCD5</label>
    </interactant>
    <organismsDiffer>false</organismsDiffer>
    <experiments>3</experiments>
</comment>
<comment type="interaction">
    <interactant intactId="EBI-2339393">
        <id>Q9NS91</id>
    </interactant>
    <interactant intactId="EBI-372899">
        <id>Q13148</id>
        <label>TARDBP</label>
    </interactant>
    <organismsDiffer>false</organismsDiffer>
    <experiments>3</experiments>
</comment>
<comment type="interaction">
    <interactant intactId="EBI-2339393">
        <id>Q9NS91</id>
    </interactant>
    <interactant intactId="EBI-529518">
        <id>Q86VP1</id>
        <label>TAX1BP1</label>
    </interactant>
    <organismsDiffer>false</organismsDiffer>
    <experiments>6</experiments>
</comment>
<comment type="interaction">
    <interactant intactId="EBI-2339393">
        <id>Q9NS91</id>
    </interactant>
    <interactant intactId="EBI-2339348">
        <id>P49459</id>
        <label>UBE2A</label>
    </interactant>
    <organismsDiffer>false</organismsDiffer>
    <experiments>4</experiments>
</comment>
<comment type="interaction">
    <interactant intactId="EBI-2339393">
        <id>Q9NS91</id>
    </interactant>
    <interactant intactId="EBI-712629">
        <id>P63146</id>
        <label>UBE2B</label>
    </interactant>
    <organismsDiffer>false</organismsDiffer>
    <experiments>7</experiments>
</comment>
<comment type="subcellular location">
    <subcellularLocation>
        <location evidence="9 16 18">Nucleus</location>
    </subcellularLocation>
    <subcellularLocation>
        <location evidence="9">Cytoplasm</location>
        <location evidence="9">Cytoskeleton</location>
        <location evidence="9">Microtubule organizing center</location>
        <location evidence="9">Centrosome</location>
    </subcellularLocation>
    <text evidence="9 16 18">Associates with chromatin (PubMed:25931565). Colocalizes with SLF1 in the nucleus and to centrosomes (PubMed:15632077). Relocalizes with SLF1 to nuclear foci in response to DNA damage (PubMed:22036607). Accumulates with the SLF1-SLF2 and SMC5-SMC6 complexes at replication-coupled DNA interstrand repair and DNA double-strand breaks (DSBs) sites on chromatin in a ubiquitin-dependent manner (PubMed:25931565).</text>
</comment>
<comment type="similarity">
    <text evidence="22">Belongs to the RAD18 family.</text>
</comment>